<keyword id="KW-0963">Cytoplasm</keyword>
<evidence type="ECO:0000250" key="1"/>
<evidence type="ECO:0000305" key="2"/>
<protein>
    <recommendedName>
        <fullName>Putative universal stress protein SACOL1759</fullName>
    </recommendedName>
</protein>
<accession>Q5HF64</accession>
<reference key="1">
    <citation type="journal article" date="2005" name="J. Bacteriol.">
        <title>Insights on evolution of virulence and resistance from the complete genome analysis of an early methicillin-resistant Staphylococcus aureus strain and a biofilm-producing methicillin-resistant Staphylococcus epidermidis strain.</title>
        <authorList>
            <person name="Gill S.R."/>
            <person name="Fouts D.E."/>
            <person name="Archer G.L."/>
            <person name="Mongodin E.F."/>
            <person name="DeBoy R.T."/>
            <person name="Ravel J."/>
            <person name="Paulsen I.T."/>
            <person name="Kolonay J.F."/>
            <person name="Brinkac L.M."/>
            <person name="Beanan M.J."/>
            <person name="Dodson R.J."/>
            <person name="Daugherty S.C."/>
            <person name="Madupu R."/>
            <person name="Angiuoli S.V."/>
            <person name="Durkin A.S."/>
            <person name="Haft D.H."/>
            <person name="Vamathevan J.J."/>
            <person name="Khouri H."/>
            <person name="Utterback T.R."/>
            <person name="Lee C."/>
            <person name="Dimitrov G."/>
            <person name="Jiang L."/>
            <person name="Qin H."/>
            <person name="Weidman J."/>
            <person name="Tran K."/>
            <person name="Kang K.H."/>
            <person name="Hance I.R."/>
            <person name="Nelson K.E."/>
            <person name="Fraser C.M."/>
        </authorList>
    </citation>
    <scope>NUCLEOTIDE SEQUENCE [LARGE SCALE GENOMIC DNA]</scope>
    <source>
        <strain>COL</strain>
    </source>
</reference>
<comment type="subcellular location">
    <subcellularLocation>
        <location evidence="1">Cytoplasm</location>
    </subcellularLocation>
</comment>
<comment type="similarity">
    <text evidence="2">Belongs to the universal stress protein A family.</text>
</comment>
<feature type="chain" id="PRO_0000288890" description="Putative universal stress protein SACOL1759">
    <location>
        <begin position="1"/>
        <end position="166"/>
    </location>
</feature>
<proteinExistence type="inferred from homology"/>
<dbReference type="EMBL" id="CP000046">
    <property type="protein sequence ID" value="AAW38288.1"/>
    <property type="molecule type" value="Genomic_DNA"/>
</dbReference>
<dbReference type="RefSeq" id="WP_000634175.1">
    <property type="nucleotide sequence ID" value="NZ_JBGOFO010000008.1"/>
</dbReference>
<dbReference type="SMR" id="Q5HF64"/>
<dbReference type="KEGG" id="sac:SACOL1759"/>
<dbReference type="HOGENOM" id="CLU_049301_16_0_9"/>
<dbReference type="Proteomes" id="UP000000530">
    <property type="component" value="Chromosome"/>
</dbReference>
<dbReference type="GO" id="GO:0005737">
    <property type="term" value="C:cytoplasm"/>
    <property type="evidence" value="ECO:0007669"/>
    <property type="project" value="UniProtKB-SubCell"/>
</dbReference>
<dbReference type="CDD" id="cd00293">
    <property type="entry name" value="USP-like"/>
    <property type="match status" value="1"/>
</dbReference>
<dbReference type="Gene3D" id="3.40.50.620">
    <property type="entry name" value="HUPs"/>
    <property type="match status" value="1"/>
</dbReference>
<dbReference type="InterPro" id="IPR014729">
    <property type="entry name" value="Rossmann-like_a/b/a_fold"/>
</dbReference>
<dbReference type="InterPro" id="IPR006015">
    <property type="entry name" value="Universal_stress_UspA"/>
</dbReference>
<dbReference type="InterPro" id="IPR006016">
    <property type="entry name" value="UspA"/>
</dbReference>
<dbReference type="PANTHER" id="PTHR46268">
    <property type="entry name" value="STRESS RESPONSE PROTEIN NHAX"/>
    <property type="match status" value="1"/>
</dbReference>
<dbReference type="PANTHER" id="PTHR46268:SF6">
    <property type="entry name" value="UNIVERSAL STRESS PROTEIN UP12"/>
    <property type="match status" value="1"/>
</dbReference>
<dbReference type="Pfam" id="PF00582">
    <property type="entry name" value="Usp"/>
    <property type="match status" value="1"/>
</dbReference>
<dbReference type="PIRSF" id="PIRSF006276">
    <property type="entry name" value="UspA"/>
    <property type="match status" value="1"/>
</dbReference>
<dbReference type="PRINTS" id="PR01438">
    <property type="entry name" value="UNVRSLSTRESS"/>
</dbReference>
<dbReference type="SUPFAM" id="SSF52402">
    <property type="entry name" value="Adenine nucleotide alpha hydrolases-like"/>
    <property type="match status" value="1"/>
</dbReference>
<name>Y1759_STAAC</name>
<sequence>MITYKNILIAVDGSHEAEWAFNRAVGVAKRNDAKLTIVNVIDSRTYSSYEVYDAQFTEKSKHFAEELLNGYKEVATNAGVKDVETRLEFGSPKSIIPKKLAHEINADLIMSGTSGLNAVERFIVGSVSESIVRHAPCDVLVVRTEELPADFQPQVATTQLREKYQN</sequence>
<gene>
    <name type="ordered locus">SACOL1759</name>
</gene>
<organism>
    <name type="scientific">Staphylococcus aureus (strain COL)</name>
    <dbReference type="NCBI Taxonomy" id="93062"/>
    <lineage>
        <taxon>Bacteria</taxon>
        <taxon>Bacillati</taxon>
        <taxon>Bacillota</taxon>
        <taxon>Bacilli</taxon>
        <taxon>Bacillales</taxon>
        <taxon>Staphylococcaceae</taxon>
        <taxon>Staphylococcus</taxon>
    </lineage>
</organism>